<name>PNP_MYCMM</name>
<dbReference type="EC" id="2.7.7.8" evidence="1"/>
<dbReference type="EMBL" id="CP000854">
    <property type="protein sequence ID" value="ACC40374.1"/>
    <property type="molecule type" value="Genomic_DNA"/>
</dbReference>
<dbReference type="RefSeq" id="WP_012393717.1">
    <property type="nucleotide sequence ID" value="NC_010612.1"/>
</dbReference>
<dbReference type="SMR" id="B2HKV3"/>
<dbReference type="STRING" id="216594.MMAR_1925"/>
<dbReference type="GeneID" id="93437836"/>
<dbReference type="KEGG" id="mmi:MMAR_1925"/>
<dbReference type="eggNOG" id="COG1185">
    <property type="taxonomic scope" value="Bacteria"/>
</dbReference>
<dbReference type="HOGENOM" id="CLU_004217_2_2_11"/>
<dbReference type="OrthoDB" id="9804305at2"/>
<dbReference type="Proteomes" id="UP000001190">
    <property type="component" value="Chromosome"/>
</dbReference>
<dbReference type="GO" id="GO:0005829">
    <property type="term" value="C:cytosol"/>
    <property type="evidence" value="ECO:0007669"/>
    <property type="project" value="TreeGrafter"/>
</dbReference>
<dbReference type="GO" id="GO:0000175">
    <property type="term" value="F:3'-5'-RNA exonuclease activity"/>
    <property type="evidence" value="ECO:0007669"/>
    <property type="project" value="TreeGrafter"/>
</dbReference>
<dbReference type="GO" id="GO:0000287">
    <property type="term" value="F:magnesium ion binding"/>
    <property type="evidence" value="ECO:0007669"/>
    <property type="project" value="UniProtKB-UniRule"/>
</dbReference>
<dbReference type="GO" id="GO:0004654">
    <property type="term" value="F:polyribonucleotide nucleotidyltransferase activity"/>
    <property type="evidence" value="ECO:0007669"/>
    <property type="project" value="UniProtKB-UniRule"/>
</dbReference>
<dbReference type="GO" id="GO:0003723">
    <property type="term" value="F:RNA binding"/>
    <property type="evidence" value="ECO:0007669"/>
    <property type="project" value="UniProtKB-UniRule"/>
</dbReference>
<dbReference type="GO" id="GO:0006402">
    <property type="term" value="P:mRNA catabolic process"/>
    <property type="evidence" value="ECO:0007669"/>
    <property type="project" value="UniProtKB-UniRule"/>
</dbReference>
<dbReference type="GO" id="GO:0006396">
    <property type="term" value="P:RNA processing"/>
    <property type="evidence" value="ECO:0007669"/>
    <property type="project" value="InterPro"/>
</dbReference>
<dbReference type="CDD" id="cd02393">
    <property type="entry name" value="KH-I_PNPase"/>
    <property type="match status" value="1"/>
</dbReference>
<dbReference type="CDD" id="cd11364">
    <property type="entry name" value="RNase_PH_PNPase_2"/>
    <property type="match status" value="1"/>
</dbReference>
<dbReference type="CDD" id="cd04472">
    <property type="entry name" value="S1_PNPase"/>
    <property type="match status" value="1"/>
</dbReference>
<dbReference type="FunFam" id="2.40.50.140:FF:000069">
    <property type="entry name" value="Polyribonucleotide nucleotidyltransferase"/>
    <property type="match status" value="1"/>
</dbReference>
<dbReference type="FunFam" id="3.30.1370.10:FF:000001">
    <property type="entry name" value="Polyribonucleotide nucleotidyltransferase"/>
    <property type="match status" value="1"/>
</dbReference>
<dbReference type="FunFam" id="3.30.230.70:FF:000001">
    <property type="entry name" value="Polyribonucleotide nucleotidyltransferase"/>
    <property type="match status" value="1"/>
</dbReference>
<dbReference type="FunFam" id="3.30.230.70:FF:000002">
    <property type="entry name" value="Polyribonucleotide nucleotidyltransferase"/>
    <property type="match status" value="1"/>
</dbReference>
<dbReference type="Gene3D" id="3.30.230.70">
    <property type="entry name" value="GHMP Kinase, N-terminal domain"/>
    <property type="match status" value="2"/>
</dbReference>
<dbReference type="Gene3D" id="3.30.1370.10">
    <property type="entry name" value="K Homology domain, type 1"/>
    <property type="match status" value="1"/>
</dbReference>
<dbReference type="Gene3D" id="2.40.50.140">
    <property type="entry name" value="Nucleic acid-binding proteins"/>
    <property type="match status" value="1"/>
</dbReference>
<dbReference type="HAMAP" id="MF_01595">
    <property type="entry name" value="PNPase"/>
    <property type="match status" value="1"/>
</dbReference>
<dbReference type="InterPro" id="IPR001247">
    <property type="entry name" value="ExoRNase_PH_dom1"/>
</dbReference>
<dbReference type="InterPro" id="IPR036345">
    <property type="entry name" value="ExoRNase_PH_dom2_sf"/>
</dbReference>
<dbReference type="InterPro" id="IPR014069">
    <property type="entry name" value="GPSI/PNP"/>
</dbReference>
<dbReference type="InterPro" id="IPR004087">
    <property type="entry name" value="KH_dom"/>
</dbReference>
<dbReference type="InterPro" id="IPR004088">
    <property type="entry name" value="KH_dom_type_1"/>
</dbReference>
<dbReference type="InterPro" id="IPR036612">
    <property type="entry name" value="KH_dom_type_1_sf"/>
</dbReference>
<dbReference type="InterPro" id="IPR012340">
    <property type="entry name" value="NA-bd_OB-fold"/>
</dbReference>
<dbReference type="InterPro" id="IPR012162">
    <property type="entry name" value="PNPase"/>
</dbReference>
<dbReference type="InterPro" id="IPR027408">
    <property type="entry name" value="PNPase/RNase_PH_dom_sf"/>
</dbReference>
<dbReference type="InterPro" id="IPR015848">
    <property type="entry name" value="PNPase_PH_RNA-bd_bac/org-type"/>
</dbReference>
<dbReference type="InterPro" id="IPR036456">
    <property type="entry name" value="PNPase_PH_RNA-bd_sf"/>
</dbReference>
<dbReference type="InterPro" id="IPR020568">
    <property type="entry name" value="Ribosomal_Su5_D2-typ_SF"/>
</dbReference>
<dbReference type="InterPro" id="IPR003029">
    <property type="entry name" value="S1_domain"/>
</dbReference>
<dbReference type="NCBIfam" id="TIGR03591">
    <property type="entry name" value="polynuc_phos"/>
    <property type="match status" value="1"/>
</dbReference>
<dbReference type="NCBIfam" id="TIGR02696">
    <property type="entry name" value="pppGpp_PNP"/>
    <property type="match status" value="1"/>
</dbReference>
<dbReference type="NCBIfam" id="NF008805">
    <property type="entry name" value="PRK11824.1"/>
    <property type="match status" value="1"/>
</dbReference>
<dbReference type="PANTHER" id="PTHR11252">
    <property type="entry name" value="POLYRIBONUCLEOTIDE NUCLEOTIDYLTRANSFERASE"/>
    <property type="match status" value="1"/>
</dbReference>
<dbReference type="PANTHER" id="PTHR11252:SF0">
    <property type="entry name" value="POLYRIBONUCLEOTIDE NUCLEOTIDYLTRANSFERASE 1, MITOCHONDRIAL"/>
    <property type="match status" value="1"/>
</dbReference>
<dbReference type="Pfam" id="PF00013">
    <property type="entry name" value="KH_1"/>
    <property type="match status" value="1"/>
</dbReference>
<dbReference type="Pfam" id="PF03726">
    <property type="entry name" value="PNPase"/>
    <property type="match status" value="1"/>
</dbReference>
<dbReference type="Pfam" id="PF01138">
    <property type="entry name" value="RNase_PH"/>
    <property type="match status" value="2"/>
</dbReference>
<dbReference type="Pfam" id="PF00575">
    <property type="entry name" value="S1"/>
    <property type="match status" value="1"/>
</dbReference>
<dbReference type="PIRSF" id="PIRSF005499">
    <property type="entry name" value="PNPase"/>
    <property type="match status" value="1"/>
</dbReference>
<dbReference type="SMART" id="SM00322">
    <property type="entry name" value="KH"/>
    <property type="match status" value="1"/>
</dbReference>
<dbReference type="SMART" id="SM00316">
    <property type="entry name" value="S1"/>
    <property type="match status" value="1"/>
</dbReference>
<dbReference type="SUPFAM" id="SSF54791">
    <property type="entry name" value="Eukaryotic type KH-domain (KH-domain type I)"/>
    <property type="match status" value="1"/>
</dbReference>
<dbReference type="SUPFAM" id="SSF50249">
    <property type="entry name" value="Nucleic acid-binding proteins"/>
    <property type="match status" value="1"/>
</dbReference>
<dbReference type="SUPFAM" id="SSF46915">
    <property type="entry name" value="Polynucleotide phosphorylase/guanosine pentaphosphate synthase (PNPase/GPSI), domain 3"/>
    <property type="match status" value="1"/>
</dbReference>
<dbReference type="SUPFAM" id="SSF55666">
    <property type="entry name" value="Ribonuclease PH domain 2-like"/>
    <property type="match status" value="2"/>
</dbReference>
<dbReference type="SUPFAM" id="SSF54211">
    <property type="entry name" value="Ribosomal protein S5 domain 2-like"/>
    <property type="match status" value="2"/>
</dbReference>
<dbReference type="PROSITE" id="PS50084">
    <property type="entry name" value="KH_TYPE_1"/>
    <property type="match status" value="1"/>
</dbReference>
<dbReference type="PROSITE" id="PS50126">
    <property type="entry name" value="S1"/>
    <property type="match status" value="1"/>
</dbReference>
<keyword id="KW-0963">Cytoplasm</keyword>
<keyword id="KW-0460">Magnesium</keyword>
<keyword id="KW-0479">Metal-binding</keyword>
<keyword id="KW-0548">Nucleotidyltransferase</keyword>
<keyword id="KW-1185">Reference proteome</keyword>
<keyword id="KW-0694">RNA-binding</keyword>
<keyword id="KW-0808">Transferase</keyword>
<gene>
    <name evidence="1" type="primary">pnp</name>
    <name type="ordered locus">MMAR_1925</name>
</gene>
<protein>
    <recommendedName>
        <fullName evidence="1">Polyribonucleotide nucleotidyltransferase</fullName>
        <ecNumber evidence="1">2.7.7.8</ecNumber>
    </recommendedName>
    <alternativeName>
        <fullName evidence="1">Polynucleotide phosphorylase</fullName>
        <shortName evidence="1">PNPase</shortName>
    </alternativeName>
</protein>
<comment type="function">
    <text evidence="1">Involved in mRNA degradation. Catalyzes the phosphorolysis of single-stranded polyribonucleotides processively in the 3'- to 5'-direction.</text>
</comment>
<comment type="catalytic activity">
    <reaction evidence="1">
        <text>RNA(n+1) + phosphate = RNA(n) + a ribonucleoside 5'-diphosphate</text>
        <dbReference type="Rhea" id="RHEA:22096"/>
        <dbReference type="Rhea" id="RHEA-COMP:14527"/>
        <dbReference type="Rhea" id="RHEA-COMP:17342"/>
        <dbReference type="ChEBI" id="CHEBI:43474"/>
        <dbReference type="ChEBI" id="CHEBI:57930"/>
        <dbReference type="ChEBI" id="CHEBI:140395"/>
        <dbReference type="EC" id="2.7.7.8"/>
    </reaction>
</comment>
<comment type="cofactor">
    <cofactor evidence="1">
        <name>Mg(2+)</name>
        <dbReference type="ChEBI" id="CHEBI:18420"/>
    </cofactor>
</comment>
<comment type="subcellular location">
    <subcellularLocation>
        <location evidence="1">Cytoplasm</location>
    </subcellularLocation>
</comment>
<comment type="similarity">
    <text evidence="1">Belongs to the polyribonucleotide nucleotidyltransferase family.</text>
</comment>
<organism>
    <name type="scientific">Mycobacterium marinum (strain ATCC BAA-535 / M)</name>
    <dbReference type="NCBI Taxonomy" id="216594"/>
    <lineage>
        <taxon>Bacteria</taxon>
        <taxon>Bacillati</taxon>
        <taxon>Actinomycetota</taxon>
        <taxon>Actinomycetes</taxon>
        <taxon>Mycobacteriales</taxon>
        <taxon>Mycobacteriaceae</taxon>
        <taxon>Mycobacterium</taxon>
        <taxon>Mycobacterium ulcerans group</taxon>
    </lineage>
</organism>
<feature type="chain" id="PRO_1000147934" description="Polyribonucleotide nucleotidyltransferase">
    <location>
        <begin position="1"/>
        <end position="762"/>
    </location>
</feature>
<feature type="domain" description="KH" evidence="1">
    <location>
        <begin position="597"/>
        <end position="656"/>
    </location>
</feature>
<feature type="domain" description="S1 motif" evidence="1">
    <location>
        <begin position="668"/>
        <end position="737"/>
    </location>
</feature>
<feature type="binding site" evidence="1">
    <location>
        <position position="531"/>
    </location>
    <ligand>
        <name>Mg(2+)</name>
        <dbReference type="ChEBI" id="CHEBI:18420"/>
    </ligand>
</feature>
<feature type="binding site" evidence="1">
    <location>
        <position position="537"/>
    </location>
    <ligand>
        <name>Mg(2+)</name>
        <dbReference type="ChEBI" id="CHEBI:18420"/>
    </ligand>
</feature>
<sequence>MSVAETEEGVFEATATIDNGSFGTRTIRFETGRLAQQAAGSVVAYLDDENMLLSATTASKNPKEHFDFFPLTVDVEERMYAAGRIPGSFFRREGRPSTDAILTCRLIDRPLRPSFVNGLRNEIQVVVTILSLDPNDLYDVVAINAASASTQLAGLPFSGPVGGVRVALIDGQWVAFPNVEQLERAVFDMVVAGRIVGTEEDGTPDVAIMMVEAEATDKVIELVEGGAPAPTESVVAQGLEAAKPFIAALCTAQQELADASGATAKTGAEYPVFPEYGDDVYYAVSSVATDGLAAALTIGGKAERNQRTEEIKAEVLERLADTYEGREKEIGAAFRSLTKKLVRQRIVTDHFRIDGRGITDIRALSAEVALVPRAHGSALFERGETQILGVTTLDMVKMAQQIDSLGPETTKRYMHHYNFPPFSTGETGRVGSPKRREIGHGALAERALMPVLPSVEEFPYAIRQVSEALGSNGSTSMGSVCASTLALLNAGVPLKAPVAGIAMGLVSDDVEVDGKTERRFVTLTDILGAEDAFGDMDFKVAGTKDFVTALQLDTKLDGIPSQVLAGALAQAKDARLTILEVMAEAIDTPDEMSPYAPRVTTIKVPVDKIGEVIGPKGKVINSITEETGAQISIEDDGTVFVGATDGPSAQAAIDKINAIANPQLPTVGERFLGTVVKTTDFGAFVSLLPGRDGLVHISKLGKGKRIAKVEDVVNVGDKLRVEIADIDKRGKISLVLVAEDDDSAAAAAADSPAPADAATASS</sequence>
<evidence type="ECO:0000255" key="1">
    <source>
        <dbReference type="HAMAP-Rule" id="MF_01595"/>
    </source>
</evidence>
<reference key="1">
    <citation type="journal article" date="2008" name="Genome Res.">
        <title>Insights from the complete genome sequence of Mycobacterium marinum on the evolution of Mycobacterium tuberculosis.</title>
        <authorList>
            <person name="Stinear T.P."/>
            <person name="Seemann T."/>
            <person name="Harrison P.F."/>
            <person name="Jenkin G.A."/>
            <person name="Davies J.K."/>
            <person name="Johnson P.D."/>
            <person name="Abdellah Z."/>
            <person name="Arrowsmith C."/>
            <person name="Chillingworth T."/>
            <person name="Churcher C."/>
            <person name="Clarke K."/>
            <person name="Cronin A."/>
            <person name="Davis P."/>
            <person name="Goodhead I."/>
            <person name="Holroyd N."/>
            <person name="Jagels K."/>
            <person name="Lord A."/>
            <person name="Moule S."/>
            <person name="Mungall K."/>
            <person name="Norbertczak H."/>
            <person name="Quail M.A."/>
            <person name="Rabbinowitsch E."/>
            <person name="Walker D."/>
            <person name="White B."/>
            <person name="Whitehead S."/>
            <person name="Small P.L."/>
            <person name="Brosch R."/>
            <person name="Ramakrishnan L."/>
            <person name="Fischbach M.A."/>
            <person name="Parkhill J."/>
            <person name="Cole S.T."/>
        </authorList>
    </citation>
    <scope>NUCLEOTIDE SEQUENCE [LARGE SCALE GENOMIC DNA]</scope>
    <source>
        <strain>ATCC BAA-535 / M</strain>
    </source>
</reference>
<proteinExistence type="inferred from homology"/>
<accession>B2HKV3</accession>